<gene>
    <name type="primary">U</name>
    <name type="ordered locus">Mup50</name>
</gene>
<dbReference type="EMBL" id="AF083977">
    <property type="protein sequence ID" value="AAF01128.1"/>
    <property type="molecule type" value="Genomic_DNA"/>
</dbReference>
<dbReference type="RefSeq" id="NP_050654.1">
    <property type="nucleotide sequence ID" value="NC_000929.1"/>
</dbReference>
<dbReference type="PDB" id="5YVQ">
    <property type="method" value="X-ray"/>
    <property type="resolution" value="2.10 A"/>
    <property type="chains" value="B=1-175"/>
</dbReference>
<dbReference type="PDBsum" id="5YVQ"/>
<dbReference type="SMR" id="Q9T1U9"/>
<dbReference type="GeneID" id="2636270"/>
<dbReference type="KEGG" id="vg:2636270"/>
<dbReference type="Proteomes" id="UP000002611">
    <property type="component" value="Genome"/>
</dbReference>
<dbReference type="GO" id="GO:0030430">
    <property type="term" value="C:host cell cytoplasm"/>
    <property type="evidence" value="ECO:0007669"/>
    <property type="project" value="UniProtKB-SubCell"/>
</dbReference>
<dbReference type="GO" id="GO:0098024">
    <property type="term" value="C:virus tail, fiber"/>
    <property type="evidence" value="ECO:0007669"/>
    <property type="project" value="UniProtKB-KW"/>
</dbReference>
<dbReference type="GO" id="GO:0098671">
    <property type="term" value="P:adhesion receptor-mediated virion attachment to host cell"/>
    <property type="evidence" value="ECO:0007669"/>
    <property type="project" value="UniProtKB-KW"/>
</dbReference>
<dbReference type="GO" id="GO:0046718">
    <property type="term" value="P:symbiont entry into host cell"/>
    <property type="evidence" value="ECO:0007669"/>
    <property type="project" value="UniProtKB-KW"/>
</dbReference>
<dbReference type="GO" id="GO:0098678">
    <property type="term" value="P:viral tropism switching"/>
    <property type="evidence" value="ECO:0007669"/>
    <property type="project" value="UniProtKB-KW"/>
</dbReference>
<dbReference type="GO" id="GO:0098004">
    <property type="term" value="P:virus tail fiber assembly"/>
    <property type="evidence" value="ECO:0007669"/>
    <property type="project" value="UniProtKB-KW"/>
</dbReference>
<dbReference type="InterPro" id="IPR003458">
    <property type="entry name" value="Phage_T4_Gp38_tail_assem"/>
</dbReference>
<dbReference type="InterPro" id="IPR051220">
    <property type="entry name" value="TFA_Chaperone"/>
</dbReference>
<dbReference type="PANTHER" id="PTHR34413:SF2">
    <property type="entry name" value="PROPHAGE TAIL FIBER ASSEMBLY PROTEIN HOMOLOG TFAE-RELATED"/>
    <property type="match status" value="1"/>
</dbReference>
<dbReference type="PANTHER" id="PTHR34413">
    <property type="entry name" value="PROPHAGE TAIL FIBER ASSEMBLY PROTEIN HOMOLOG TFAE-RELATED-RELATED"/>
    <property type="match status" value="1"/>
</dbReference>
<dbReference type="Pfam" id="PF02413">
    <property type="entry name" value="Caudo_TAP"/>
    <property type="match status" value="1"/>
</dbReference>
<organismHost>
    <name type="scientific">Enterobacteriaceae</name>
    <dbReference type="NCBI Taxonomy" id="543"/>
</organismHost>
<evidence type="ECO:0000269" key="1">
    <source>
    </source>
</evidence>
<evidence type="ECO:0000269" key="2">
    <source>
    </source>
</evidence>
<evidence type="ECO:0000305" key="3"/>
<evidence type="ECO:0007829" key="4">
    <source>
        <dbReference type="PDB" id="5YVQ"/>
    </source>
</evidence>
<feature type="chain" id="PRO_0000070311" description="Tail fiber assembly protein U">
    <location>
        <begin position="1"/>
        <end position="175"/>
    </location>
</feature>
<feature type="helix" evidence="4">
    <location>
        <begin position="15"/>
        <end position="24"/>
    </location>
</feature>
<feature type="helix" evidence="4">
    <location>
        <begin position="37"/>
        <end position="40"/>
    </location>
</feature>
<feature type="helix" evidence="4">
    <location>
        <begin position="41"/>
        <end position="43"/>
    </location>
</feature>
<feature type="strand" evidence="4">
    <location>
        <begin position="48"/>
        <end position="53"/>
    </location>
</feature>
<feature type="strand" evidence="4">
    <location>
        <begin position="58"/>
        <end position="64"/>
    </location>
</feature>
<feature type="helix" evidence="4">
    <location>
        <begin position="66"/>
        <end position="68"/>
    </location>
</feature>
<feature type="strand" evidence="4">
    <location>
        <begin position="74"/>
        <end position="79"/>
    </location>
</feature>
<feature type="helix" evidence="4">
    <location>
        <begin position="83"/>
        <end position="86"/>
    </location>
</feature>
<feature type="strand" evidence="4">
    <location>
        <begin position="94"/>
        <end position="102"/>
    </location>
</feature>
<sequence length="175" mass="20310">MMHLKNIKSENPKTKEQYQLTKNFDVIWLWSEDGKNWYEEVNNFQDDTIKIVYDENNIIVAITKDASTLNPEGFSVVEIPDITANRRADDSGKWMFKDGAVVKRIYTADEQQQQAESQKAALLSEAESVIQPLERAVRLNMATDEERARLESWERYSVLVSRVDTANPEWPQKPE</sequence>
<accession>Q9T1U9</accession>
<organism>
    <name type="scientific">Escherichia phage Mu</name>
    <name type="common">Bacteriophage Mu</name>
    <dbReference type="NCBI Taxonomy" id="2681603"/>
    <lineage>
        <taxon>Viruses</taxon>
        <taxon>Duplodnaviria</taxon>
        <taxon>Heunggongvirae</taxon>
        <taxon>Uroviricota</taxon>
        <taxon>Caudoviricetes</taxon>
        <taxon>Muvirus</taxon>
        <taxon>Muvirus mu</taxon>
    </lineage>
</organism>
<reference key="1">
    <citation type="journal article" date="2002" name="J. Mol. Biol.">
        <title>Bacteriophage Mu genome sequence: analysis and comparison with Mu-like prophages in Haemophilus, Neisseria and Deinococcus.</title>
        <authorList>
            <person name="Morgan G.J."/>
            <person name="Hatfull G.F."/>
            <person name="Casjens S."/>
            <person name="Hendrix R.W."/>
        </authorList>
    </citation>
    <scope>NUCLEOTIDE SEQUENCE [LARGE SCALE GENOMIC DNA]</scope>
</reference>
<reference key="2">
    <citation type="journal article" date="1985" name="Virology">
        <title>Morphogenetic structures present in lysates of amber mutants of bacteriophage Mu.</title>
        <authorList>
            <person name="Grundy F.J."/>
            <person name="Howe M.M."/>
        </authorList>
    </citation>
    <scope>DISRUPTION PHENOTYPE</scope>
</reference>
<reference key="3">
    <citation type="journal article" date="1993" name="Genetics">
        <title>Mutational analysis of a C-dependent late promoter of bacteriophage Mu.</title>
        <authorList>
            <person name="Chiang L.W."/>
            <person name="Howe M.M."/>
        </authorList>
    </citation>
    <scope>INDUCTION</scope>
</reference>
<comment type="function">
    <text evidence="3">Chaperone involved in tail fiber assembly. Remains associated to the tail fiber and participates in the host receptor binding. Binds to the primary receptor (Probable). Two alternate tail fiber assembly proteins U and U' are encoded extending the host range of the virus.</text>
</comment>
<comment type="subcellular location">
    <subcellularLocation>
        <location>Virion</location>
    </subcellularLocation>
    <subcellularLocation>
        <location evidence="3">Host cytoplasm</location>
    </subcellularLocation>
    <text>Tail fiber.</text>
</comment>
<comment type="induction">
    <text evidence="2">Expressed in the late phase of the viral replicative cycle. Expression of late genes is activated by the viral late transcription activator C. Expressed alternatively with tail fiber assembly protein U'. The switch from S-U to S'-U' is performed through inversion of a DNA segment called G by the phage invertase protein Gin.</text>
</comment>
<comment type="disruption phenotype">
    <text evidence="1">Viral particles lack tail fibers in inversion-defective gin mutants (blocked in G+ orientation; no switch to S'-U').</text>
</comment>
<comment type="miscellaneous">
    <text>The orientation of the G segment is defined as G+ and G-. G+ orientation provides S-U fibers whereas G- provides S'-U' fibers. S-U and S'-U' dont have the same host range (e.g. respectively E.coli and C.freundii).</text>
</comment>
<comment type="similarity">
    <text evidence="3">Belongs to the tfa family.</text>
</comment>
<protein>
    <recommendedName>
        <fullName>Tail fiber assembly protein U</fullName>
    </recommendedName>
    <alternativeName>
        <fullName>Gene product 50</fullName>
        <shortName>gp50</shortName>
    </alternativeName>
    <alternativeName>
        <fullName>Gene product U</fullName>
        <shortName>gpU</shortName>
    </alternativeName>
</protein>
<keyword id="KW-0002">3D-structure</keyword>
<keyword id="KW-0143">Chaperone</keyword>
<keyword id="KW-1035">Host cytoplasm</keyword>
<keyword id="KW-0945">Host-virus interaction</keyword>
<keyword id="KW-0426">Late protein</keyword>
<keyword id="KW-1185">Reference proteome</keyword>
<keyword id="KW-1233">Viral attachment to host adhesion receptor</keyword>
<keyword id="KW-1161">Viral attachment to host cell</keyword>
<keyword id="KW-1264">Viral receptor tropism switching</keyword>
<keyword id="KW-1188">Viral release from host cell</keyword>
<keyword id="KW-1245">Viral tail assembly</keyword>
<keyword id="KW-1246">Viral tail fiber assembly</keyword>
<keyword id="KW-1230">Viral tail fiber protein</keyword>
<keyword id="KW-1227">Viral tail protein</keyword>
<keyword id="KW-0946">Virion</keyword>
<keyword id="KW-1160">Virus entry into host cell</keyword>
<proteinExistence type="evidence at protein level"/>
<name>U1_BPMU</name>